<protein>
    <recommendedName>
        <fullName evidence="1">Small ribosomal subunit protein uS10</fullName>
    </recommendedName>
    <alternativeName>
        <fullName evidence="2">30S ribosomal protein S10</fullName>
    </alternativeName>
</protein>
<evidence type="ECO:0000255" key="1">
    <source>
        <dbReference type="HAMAP-Rule" id="MF_00508"/>
    </source>
</evidence>
<evidence type="ECO:0000305" key="2"/>
<proteinExistence type="inferred from homology"/>
<reference key="1">
    <citation type="submission" date="2008-02" db="EMBL/GenBank/DDBJ databases">
        <title>Complete sequence of Haemophilus somnus 2336.</title>
        <authorList>
            <consortium name="US DOE Joint Genome Institute"/>
            <person name="Siddaramappa S."/>
            <person name="Duncan A.J."/>
            <person name="Challacombe J.F."/>
            <person name="Rainey D."/>
            <person name="Gillaspy A.F."/>
            <person name="Carson M."/>
            <person name="Gipson J."/>
            <person name="Gipson M."/>
            <person name="Bruce D."/>
            <person name="Detter J.C."/>
            <person name="Han C.S."/>
            <person name="Land M."/>
            <person name="Tapia R."/>
            <person name="Thompson L.S."/>
            <person name="Orvis J."/>
            <person name="Zaitshik J."/>
            <person name="Barnes G."/>
            <person name="Brettin T.S."/>
            <person name="Dyer D.W."/>
            <person name="Inzana T.J."/>
        </authorList>
    </citation>
    <scope>NUCLEOTIDE SEQUENCE [LARGE SCALE GENOMIC DNA]</scope>
    <source>
        <strain>2336</strain>
    </source>
</reference>
<dbReference type="EMBL" id="CP000947">
    <property type="protein sequence ID" value="ACA31745.1"/>
    <property type="molecule type" value="Genomic_DNA"/>
</dbReference>
<dbReference type="RefSeq" id="WP_001181005.1">
    <property type="nucleotide sequence ID" value="NC_010519.1"/>
</dbReference>
<dbReference type="SMR" id="B0UX12"/>
<dbReference type="STRING" id="228400.HSM_1951"/>
<dbReference type="GeneID" id="98390443"/>
<dbReference type="KEGG" id="hsm:HSM_1951"/>
<dbReference type="HOGENOM" id="CLU_122625_1_3_6"/>
<dbReference type="GO" id="GO:1990904">
    <property type="term" value="C:ribonucleoprotein complex"/>
    <property type="evidence" value="ECO:0007669"/>
    <property type="project" value="UniProtKB-KW"/>
</dbReference>
<dbReference type="GO" id="GO:0005840">
    <property type="term" value="C:ribosome"/>
    <property type="evidence" value="ECO:0007669"/>
    <property type="project" value="UniProtKB-KW"/>
</dbReference>
<dbReference type="GO" id="GO:0003735">
    <property type="term" value="F:structural constituent of ribosome"/>
    <property type="evidence" value="ECO:0007669"/>
    <property type="project" value="InterPro"/>
</dbReference>
<dbReference type="GO" id="GO:0000049">
    <property type="term" value="F:tRNA binding"/>
    <property type="evidence" value="ECO:0007669"/>
    <property type="project" value="UniProtKB-UniRule"/>
</dbReference>
<dbReference type="GO" id="GO:0006412">
    <property type="term" value="P:translation"/>
    <property type="evidence" value="ECO:0007669"/>
    <property type="project" value="UniProtKB-UniRule"/>
</dbReference>
<dbReference type="FunFam" id="3.30.70.600:FF:000001">
    <property type="entry name" value="30S ribosomal protein S10"/>
    <property type="match status" value="1"/>
</dbReference>
<dbReference type="Gene3D" id="3.30.70.600">
    <property type="entry name" value="Ribosomal protein S10 domain"/>
    <property type="match status" value="1"/>
</dbReference>
<dbReference type="HAMAP" id="MF_00508">
    <property type="entry name" value="Ribosomal_uS10"/>
    <property type="match status" value="1"/>
</dbReference>
<dbReference type="InterPro" id="IPR001848">
    <property type="entry name" value="Ribosomal_uS10"/>
</dbReference>
<dbReference type="InterPro" id="IPR018268">
    <property type="entry name" value="Ribosomal_uS10_CS"/>
</dbReference>
<dbReference type="InterPro" id="IPR027486">
    <property type="entry name" value="Ribosomal_uS10_dom"/>
</dbReference>
<dbReference type="InterPro" id="IPR036838">
    <property type="entry name" value="Ribosomal_uS10_dom_sf"/>
</dbReference>
<dbReference type="NCBIfam" id="NF001861">
    <property type="entry name" value="PRK00596.1"/>
    <property type="match status" value="1"/>
</dbReference>
<dbReference type="NCBIfam" id="TIGR01049">
    <property type="entry name" value="rpsJ_bact"/>
    <property type="match status" value="1"/>
</dbReference>
<dbReference type="PANTHER" id="PTHR11700">
    <property type="entry name" value="30S RIBOSOMAL PROTEIN S10 FAMILY MEMBER"/>
    <property type="match status" value="1"/>
</dbReference>
<dbReference type="Pfam" id="PF00338">
    <property type="entry name" value="Ribosomal_S10"/>
    <property type="match status" value="1"/>
</dbReference>
<dbReference type="PRINTS" id="PR00971">
    <property type="entry name" value="RIBOSOMALS10"/>
</dbReference>
<dbReference type="SMART" id="SM01403">
    <property type="entry name" value="Ribosomal_S10"/>
    <property type="match status" value="1"/>
</dbReference>
<dbReference type="SUPFAM" id="SSF54999">
    <property type="entry name" value="Ribosomal protein S10"/>
    <property type="match status" value="1"/>
</dbReference>
<dbReference type="PROSITE" id="PS00361">
    <property type="entry name" value="RIBOSOMAL_S10"/>
    <property type="match status" value="1"/>
</dbReference>
<accession>B0UX12</accession>
<gene>
    <name evidence="1" type="primary">rpsJ</name>
    <name type="ordered locus">HSM_1951</name>
</gene>
<organism>
    <name type="scientific">Histophilus somni (strain 2336)</name>
    <name type="common">Haemophilus somnus</name>
    <dbReference type="NCBI Taxonomy" id="228400"/>
    <lineage>
        <taxon>Bacteria</taxon>
        <taxon>Pseudomonadati</taxon>
        <taxon>Pseudomonadota</taxon>
        <taxon>Gammaproteobacteria</taxon>
        <taxon>Pasteurellales</taxon>
        <taxon>Pasteurellaceae</taxon>
        <taxon>Histophilus</taxon>
    </lineage>
</organism>
<name>RS10_HISS2</name>
<feature type="chain" id="PRO_1000081552" description="Small ribosomal subunit protein uS10">
    <location>
        <begin position="1"/>
        <end position="103"/>
    </location>
</feature>
<comment type="function">
    <text evidence="1">Involved in the binding of tRNA to the ribosomes.</text>
</comment>
<comment type="subunit">
    <text evidence="1">Part of the 30S ribosomal subunit.</text>
</comment>
<comment type="similarity">
    <text evidence="1">Belongs to the universal ribosomal protein uS10 family.</text>
</comment>
<keyword id="KW-0687">Ribonucleoprotein</keyword>
<keyword id="KW-0689">Ribosomal protein</keyword>
<sequence>MQNQRIRIRLKAFDHRLIDQSTAEIVETAKRTGAQVRGPIPLPTRKERFTVLISPHVNKDARDQYEIRTHKRLVDIVEPTEKTVDALMRLDLAAGVDVQISLG</sequence>